<sequence>MRFKLHDVHIRRGLCCVADSYISPASINSGIRALIQKGEYLQALHLYSKHDGSSPFWTSVFTFPSLLKACSALTNLSYGKTIHGSVVVLGWRYDPFIATSLVNMYVKCGFLDYAVQVFDGWSQSQSGVSARDVTVWNSMIDGYFKFRRFKEGVGCFRRMLVFGVRPDAFSLSIVVSVMCKEGNFRREEGKQIHGFMLRNSLDTDSFLKTALIDMYFKFGLSIDAWRVFVEIEDKSNVVLWNVMIVGFGGSGICESSLDLYMLAKNNSVKLVSTSFTGALGACSQSENSGFGRQIHCDVVKMGLHNDPYVCTSLLSMYSKCGMVGEAETVFSCVVDKRLEIWNAMVAAYAENDYGYSALDLFGFMRQKSVLPDSFTLSNVISCCSVLGLYNYGKSVHAELFKRPIQSTSTIESALLTLYSKCGCDPDAYLVFKSMEEKDMVAWGSLISGLCKNGKFKEALKVFGDMKDDDDSLKPDSDIMTSVTNACAGLEALRFGLQVHGSMIKTGLVLNVFVGSSLIDLYSKCGLPEMALKVFTSMSTENMVAWNSMISCYSRNNLPELSIDLFNLMLSQGIFPDSVSITSVLVAISSTASLLKGKSLHGYTLRLGIPSDTHLKNALIDMYVKCGFSKYAENIFKKMQHKSLITWNLMIYGYGSHGDCITALSLFDEMKKAGESPDDVTFLSLISACNHSGFVEEGKNIFEFMKQDYGIEPNMEHYANMVDLLGRAGLLEEAYSFIKAMPIEADSSIWLCLLSASRTHHNVELGILSAEKLLRMEPERGSTYVQLINLYMEAGLKNEAAKLLGLMKEKGLHKQPGCSWIEVSDRTNVFFSGGSSSPMKAEIFNVLNRLKSNMVDEDKAT</sequence>
<protein>
    <recommendedName>
        <fullName>Pentatricopeptide repeat-containing protein At2g40720</fullName>
    </recommendedName>
</protein>
<accession>Q7XJN6</accession>
<reference key="1">
    <citation type="journal article" date="1999" name="Nature">
        <title>Sequence and analysis of chromosome 2 of the plant Arabidopsis thaliana.</title>
        <authorList>
            <person name="Lin X."/>
            <person name="Kaul S."/>
            <person name="Rounsley S.D."/>
            <person name="Shea T.P."/>
            <person name="Benito M.-I."/>
            <person name="Town C.D."/>
            <person name="Fujii C.Y."/>
            <person name="Mason T.M."/>
            <person name="Bowman C.L."/>
            <person name="Barnstead M.E."/>
            <person name="Feldblyum T.V."/>
            <person name="Buell C.R."/>
            <person name="Ketchum K.A."/>
            <person name="Lee J.J."/>
            <person name="Ronning C.M."/>
            <person name="Koo H.L."/>
            <person name="Moffat K.S."/>
            <person name="Cronin L.A."/>
            <person name="Shen M."/>
            <person name="Pai G."/>
            <person name="Van Aken S."/>
            <person name="Umayam L."/>
            <person name="Tallon L.J."/>
            <person name="Gill J.E."/>
            <person name="Adams M.D."/>
            <person name="Carrera A.J."/>
            <person name="Creasy T.H."/>
            <person name="Goodman H.M."/>
            <person name="Somerville C.R."/>
            <person name="Copenhaver G.P."/>
            <person name="Preuss D."/>
            <person name="Nierman W.C."/>
            <person name="White O."/>
            <person name="Eisen J.A."/>
            <person name="Salzberg S.L."/>
            <person name="Fraser C.M."/>
            <person name="Venter J.C."/>
        </authorList>
    </citation>
    <scope>NUCLEOTIDE SEQUENCE [LARGE SCALE GENOMIC DNA]</scope>
    <source>
        <strain>cv. Columbia</strain>
    </source>
</reference>
<reference key="2">
    <citation type="journal article" date="2017" name="Plant J.">
        <title>Araport11: a complete reannotation of the Arabidopsis thaliana reference genome.</title>
        <authorList>
            <person name="Cheng C.Y."/>
            <person name="Krishnakumar V."/>
            <person name="Chan A.P."/>
            <person name="Thibaud-Nissen F."/>
            <person name="Schobel S."/>
            <person name="Town C.D."/>
        </authorList>
    </citation>
    <scope>GENOME REANNOTATION</scope>
    <source>
        <strain>cv. Columbia</strain>
    </source>
</reference>
<reference key="3">
    <citation type="journal article" date="2000" name="Plant Mol. Biol.">
        <title>In Arabidopsis thaliana, 1% of the genome codes for a novel protein family unique to plants.</title>
        <authorList>
            <person name="Aubourg S."/>
            <person name="Boudet N."/>
            <person name="Kreis M."/>
            <person name="Lecharny A."/>
        </authorList>
    </citation>
    <scope>GENE FAMILY</scope>
</reference>
<reference key="4">
    <citation type="journal article" date="2004" name="Plant Cell">
        <title>Genome-wide analysis of Arabidopsis pentatricopeptide repeat proteins reveals their essential role in organelle biogenesis.</title>
        <authorList>
            <person name="Lurin C."/>
            <person name="Andres C."/>
            <person name="Aubourg S."/>
            <person name="Bellaoui M."/>
            <person name="Bitton F."/>
            <person name="Bruyere C."/>
            <person name="Caboche M."/>
            <person name="Debast C."/>
            <person name="Gualberto J."/>
            <person name="Hoffmann B."/>
            <person name="Lecharny A."/>
            <person name="Le Ret M."/>
            <person name="Martin-Magniette M.-L."/>
            <person name="Mireau H."/>
            <person name="Peeters N."/>
            <person name="Renou J.-P."/>
            <person name="Szurek B."/>
            <person name="Taconnat L."/>
            <person name="Small I."/>
        </authorList>
    </citation>
    <scope>GENE FAMILY</scope>
</reference>
<comment type="similarity">
    <text evidence="1">Belongs to the PPR family. PCMP-E subfamily.</text>
</comment>
<comment type="online information" name="Pentatricopeptide repeat proteins">
    <link uri="https://ppr.plantenergy.uwa.edu.au"/>
</comment>
<name>PP197_ARATH</name>
<feature type="chain" id="PRO_0000356056" description="Pentatricopeptide repeat-containing protein At2g40720">
    <location>
        <begin position="1"/>
        <end position="860"/>
    </location>
</feature>
<feature type="repeat" description="PPR 1">
    <location>
        <begin position="59"/>
        <end position="93"/>
    </location>
</feature>
<feature type="repeat" description="PPR 2">
    <location>
        <begin position="94"/>
        <end position="124"/>
    </location>
</feature>
<feature type="repeat" description="PPR 3">
    <location>
        <begin position="132"/>
        <end position="166"/>
    </location>
</feature>
<feature type="repeat" description="PPR 4">
    <location>
        <begin position="167"/>
        <end position="203"/>
    </location>
</feature>
<feature type="repeat" description="PPR 5">
    <location>
        <begin position="204"/>
        <end position="234"/>
    </location>
</feature>
<feature type="repeat" description="PPR 6">
    <location>
        <begin position="236"/>
        <end position="270"/>
    </location>
</feature>
<feature type="repeat" description="PPR 7">
    <location>
        <begin position="271"/>
        <end position="305"/>
    </location>
</feature>
<feature type="repeat" description="PPR 8">
    <location>
        <begin position="306"/>
        <end position="340"/>
    </location>
</feature>
<feature type="repeat" description="PPR 9">
    <location>
        <begin position="341"/>
        <end position="371"/>
    </location>
</feature>
<feature type="repeat" description="PPR 10">
    <location>
        <begin position="372"/>
        <end position="406"/>
    </location>
</feature>
<feature type="repeat" description="PPR 11">
    <location>
        <begin position="407"/>
        <end position="437"/>
    </location>
</feature>
<feature type="repeat" description="PPR 12">
    <location>
        <begin position="438"/>
        <end position="472"/>
    </location>
</feature>
<feature type="repeat" description="PPR 13">
    <location>
        <begin position="475"/>
        <end position="509"/>
    </location>
</feature>
<feature type="repeat" description="PPR 14">
    <location>
        <begin position="510"/>
        <end position="540"/>
    </location>
</feature>
<feature type="repeat" description="PPR 15">
    <location>
        <begin position="541"/>
        <end position="575"/>
    </location>
</feature>
<feature type="repeat" description="PPR 16">
    <location>
        <begin position="576"/>
        <end position="610"/>
    </location>
</feature>
<feature type="repeat" description="PPR 17">
    <location>
        <begin position="611"/>
        <end position="641"/>
    </location>
</feature>
<feature type="repeat" description="PPR 18">
    <location>
        <begin position="642"/>
        <end position="676"/>
    </location>
</feature>
<feature type="repeat" description="PPR 19">
    <location>
        <begin position="677"/>
        <end position="707"/>
    </location>
</feature>
<feature type="repeat" description="PPR 20">
    <location>
        <begin position="713"/>
        <end position="743"/>
    </location>
</feature>
<feature type="region of interest" description="Type E motif">
    <location>
        <begin position="748"/>
        <end position="823"/>
    </location>
</feature>
<feature type="region of interest" description="Type E(+) motif">
    <location>
        <begin position="824"/>
        <end position="854"/>
    </location>
</feature>
<dbReference type="EMBL" id="CP002685">
    <property type="protein sequence ID" value="AEC09868.1"/>
    <property type="molecule type" value="Genomic_DNA"/>
</dbReference>
<dbReference type="PIR" id="A84833">
    <property type="entry name" value="A84833"/>
</dbReference>
<dbReference type="RefSeq" id="NP_181604.1">
    <property type="nucleotide sequence ID" value="NM_129634.2"/>
</dbReference>
<dbReference type="SMR" id="Q7XJN6"/>
<dbReference type="FunCoup" id="Q7XJN6">
    <property type="interactions" value="105"/>
</dbReference>
<dbReference type="STRING" id="3702.Q7XJN6"/>
<dbReference type="iPTMnet" id="Q7XJN6"/>
<dbReference type="PaxDb" id="3702-AT2G40720.1"/>
<dbReference type="ProteomicsDB" id="249158"/>
<dbReference type="EnsemblPlants" id="AT2G40720.1">
    <property type="protein sequence ID" value="AT2G40720.1"/>
    <property type="gene ID" value="AT2G40720"/>
</dbReference>
<dbReference type="GeneID" id="818667"/>
<dbReference type="Gramene" id="AT2G40720.1">
    <property type="protein sequence ID" value="AT2G40720.1"/>
    <property type="gene ID" value="AT2G40720"/>
</dbReference>
<dbReference type="KEGG" id="ath:AT2G40720"/>
<dbReference type="Araport" id="AT2G40720"/>
<dbReference type="TAIR" id="AT2G40720"/>
<dbReference type="eggNOG" id="KOG4197">
    <property type="taxonomic scope" value="Eukaryota"/>
</dbReference>
<dbReference type="HOGENOM" id="CLU_002706_15_0_1"/>
<dbReference type="InParanoid" id="Q7XJN6"/>
<dbReference type="OMA" id="LISCSMT"/>
<dbReference type="PhylomeDB" id="Q7XJN6"/>
<dbReference type="PRO" id="PR:Q7XJN6"/>
<dbReference type="Proteomes" id="UP000006548">
    <property type="component" value="Chromosome 2"/>
</dbReference>
<dbReference type="ExpressionAtlas" id="Q7XJN6">
    <property type="expression patterns" value="baseline and differential"/>
</dbReference>
<dbReference type="GO" id="GO:0003723">
    <property type="term" value="F:RNA binding"/>
    <property type="evidence" value="ECO:0007669"/>
    <property type="project" value="InterPro"/>
</dbReference>
<dbReference type="GO" id="GO:0009451">
    <property type="term" value="P:RNA modification"/>
    <property type="evidence" value="ECO:0007669"/>
    <property type="project" value="InterPro"/>
</dbReference>
<dbReference type="FunFam" id="1.25.40.10:FF:001192">
    <property type="entry name" value="Pentatricopeptide repeat-containing protein"/>
    <property type="match status" value="1"/>
</dbReference>
<dbReference type="FunFam" id="1.25.40.10:FF:000090">
    <property type="entry name" value="Pentatricopeptide repeat-containing protein, chloroplastic"/>
    <property type="match status" value="1"/>
</dbReference>
<dbReference type="FunFam" id="1.25.40.10:FF:000285">
    <property type="entry name" value="Pentatricopeptide repeat-containing protein, chloroplastic"/>
    <property type="match status" value="1"/>
</dbReference>
<dbReference type="FunFam" id="1.25.40.10:FF:000733">
    <property type="entry name" value="Pentatricopeptide repeat-containing protein, chloroplastic"/>
    <property type="match status" value="1"/>
</dbReference>
<dbReference type="Gene3D" id="1.25.40.10">
    <property type="entry name" value="Tetratricopeptide repeat domain"/>
    <property type="match status" value="6"/>
</dbReference>
<dbReference type="InterPro" id="IPR046848">
    <property type="entry name" value="E_motif"/>
</dbReference>
<dbReference type="InterPro" id="IPR002885">
    <property type="entry name" value="Pentatricopeptide_rpt"/>
</dbReference>
<dbReference type="InterPro" id="IPR046960">
    <property type="entry name" value="PPR_At4g14850-like_plant"/>
</dbReference>
<dbReference type="InterPro" id="IPR011990">
    <property type="entry name" value="TPR-like_helical_dom_sf"/>
</dbReference>
<dbReference type="NCBIfam" id="TIGR00756">
    <property type="entry name" value="PPR"/>
    <property type="match status" value="5"/>
</dbReference>
<dbReference type="PANTHER" id="PTHR47926">
    <property type="entry name" value="PENTATRICOPEPTIDE REPEAT-CONTAINING PROTEIN"/>
    <property type="match status" value="1"/>
</dbReference>
<dbReference type="Pfam" id="PF20431">
    <property type="entry name" value="E_motif"/>
    <property type="match status" value="1"/>
</dbReference>
<dbReference type="Pfam" id="PF01535">
    <property type="entry name" value="PPR"/>
    <property type="match status" value="9"/>
</dbReference>
<dbReference type="Pfam" id="PF13041">
    <property type="entry name" value="PPR_2"/>
    <property type="match status" value="3"/>
</dbReference>
<dbReference type="PROSITE" id="PS51375">
    <property type="entry name" value="PPR"/>
    <property type="match status" value="18"/>
</dbReference>
<evidence type="ECO:0000305" key="1"/>
<organism>
    <name type="scientific">Arabidopsis thaliana</name>
    <name type="common">Mouse-ear cress</name>
    <dbReference type="NCBI Taxonomy" id="3702"/>
    <lineage>
        <taxon>Eukaryota</taxon>
        <taxon>Viridiplantae</taxon>
        <taxon>Streptophyta</taxon>
        <taxon>Embryophyta</taxon>
        <taxon>Tracheophyta</taxon>
        <taxon>Spermatophyta</taxon>
        <taxon>Magnoliopsida</taxon>
        <taxon>eudicotyledons</taxon>
        <taxon>Gunneridae</taxon>
        <taxon>Pentapetalae</taxon>
        <taxon>rosids</taxon>
        <taxon>malvids</taxon>
        <taxon>Brassicales</taxon>
        <taxon>Brassicaceae</taxon>
        <taxon>Camelineae</taxon>
        <taxon>Arabidopsis</taxon>
    </lineage>
</organism>
<proteinExistence type="inferred from homology"/>
<keyword id="KW-1185">Reference proteome</keyword>
<keyword id="KW-0677">Repeat</keyword>
<gene>
    <name type="primary">PCMP-E26</name>
    <name type="ordered locus">At2g40720</name>
    <name type="ORF">T7D17.10</name>
</gene>